<feature type="chain" id="PRO_1000130024" description="Chaperonin GroEL">
    <location>
        <begin position="1"/>
        <end position="546"/>
    </location>
</feature>
<feature type="binding site" evidence="1">
    <location>
        <begin position="29"/>
        <end position="32"/>
    </location>
    <ligand>
        <name>ATP</name>
        <dbReference type="ChEBI" id="CHEBI:30616"/>
    </ligand>
</feature>
<feature type="binding site" evidence="1">
    <location>
        <position position="50"/>
    </location>
    <ligand>
        <name>ATP</name>
        <dbReference type="ChEBI" id="CHEBI:30616"/>
    </ligand>
</feature>
<feature type="binding site" evidence="1">
    <location>
        <begin position="86"/>
        <end position="90"/>
    </location>
    <ligand>
        <name>ATP</name>
        <dbReference type="ChEBI" id="CHEBI:30616"/>
    </ligand>
</feature>
<feature type="binding site" evidence="1">
    <location>
        <position position="414"/>
    </location>
    <ligand>
        <name>ATP</name>
        <dbReference type="ChEBI" id="CHEBI:30616"/>
    </ligand>
</feature>
<feature type="binding site" evidence="1">
    <location>
        <position position="492"/>
    </location>
    <ligand>
        <name>ATP</name>
        <dbReference type="ChEBI" id="CHEBI:30616"/>
    </ligand>
</feature>
<name>CH60_HELPG</name>
<gene>
    <name evidence="1" type="primary">groEL</name>
    <name evidence="1" type="synonym">groL</name>
    <name type="ordered locus">HPG27_9</name>
</gene>
<keyword id="KW-0067">ATP-binding</keyword>
<keyword id="KW-0143">Chaperone</keyword>
<keyword id="KW-0963">Cytoplasm</keyword>
<keyword id="KW-0413">Isomerase</keyword>
<keyword id="KW-0547">Nucleotide-binding</keyword>
<keyword id="KW-1185">Reference proteome</keyword>
<sequence length="546" mass="58228">MAKEIKFSDSARNLLFEGVRQLHDAVKVTMGPRGRNVLIQKSYGAPSITKDGVSVAKEIELSCPVANMGAQLVKEVASKTADAAGDGTTTATVLAYSIFKEGLRNITAGANPIEVKRGMDKAAEAIINELKKASKKVGGKEEITQVATISANSDHNIGKLIADAMEKVGKDGVITVEEAKGIEDELDVVEGMQFDRGYLSPYFVTNAEKMTAQLDNAYILLTDKKISSMKDILPLLEKTMKEGKPLLIIAEDIEGEALTTLVVNKLRGVLNIAAVKAPGFGDRRKEMLKDIAVLTGGQVISEELGLSLENAEVEFLGKAGRIVIDKDNTTIVDGKGHSDDVKDRVAQIKTQIASTTSDYDKEKLQERLAKLSGGVAVIKVGAASEVEMKEKKDRVDDALSATKAAVEEGIVIGGGAALIRAAQKVHLNLHDDEKVGYEIIMRAIKAPLAQIAINAGYDGGVVVNEVEKHEGHFGFNASNGKYVDMFKEGIIDPLKVERIALQNAVSVSSLLLTTEATVHEIKEEKAAPAMPDMGGMGGMGGMGGMM</sequence>
<reference key="1">
    <citation type="journal article" date="2009" name="J. Bacteriol.">
        <title>The complete genome sequence of Helicobacter pylori strain G27.</title>
        <authorList>
            <person name="Baltrus D.A."/>
            <person name="Amieva M.R."/>
            <person name="Covacci A."/>
            <person name="Lowe T.M."/>
            <person name="Merrell D.S."/>
            <person name="Ottemann K.M."/>
            <person name="Stein M."/>
            <person name="Salama N.R."/>
            <person name="Guillemin K."/>
        </authorList>
    </citation>
    <scope>NUCLEOTIDE SEQUENCE [LARGE SCALE GENOMIC DNA]</scope>
    <source>
        <strain>G27</strain>
    </source>
</reference>
<comment type="function">
    <text evidence="1">Together with its co-chaperonin GroES, plays an essential role in assisting protein folding. The GroEL-GroES system forms a nano-cage that allows encapsulation of the non-native substrate proteins and provides a physical environment optimized to promote and accelerate protein folding.</text>
</comment>
<comment type="catalytic activity">
    <reaction evidence="1">
        <text>ATP + H2O + a folded polypeptide = ADP + phosphate + an unfolded polypeptide.</text>
        <dbReference type="EC" id="5.6.1.7"/>
    </reaction>
</comment>
<comment type="subunit">
    <text evidence="1">Forms a cylinder of 14 subunits composed of two heptameric rings stacked back-to-back. Interacts with the co-chaperonin GroES.</text>
</comment>
<comment type="subcellular location">
    <subcellularLocation>
        <location evidence="1">Cytoplasm</location>
    </subcellularLocation>
</comment>
<comment type="similarity">
    <text evidence="1">Belongs to the chaperonin (HSP60) family.</text>
</comment>
<accession>B5Z6D1</accession>
<dbReference type="EC" id="5.6.1.7" evidence="1"/>
<dbReference type="EMBL" id="CP001173">
    <property type="protein sequence ID" value="ACI26785.1"/>
    <property type="molecule type" value="Genomic_DNA"/>
</dbReference>
<dbReference type="RefSeq" id="WP_001040303.1">
    <property type="nucleotide sequence ID" value="NC_011333.1"/>
</dbReference>
<dbReference type="SMR" id="B5Z6D1"/>
<dbReference type="KEGG" id="hpg:HPG27_9"/>
<dbReference type="HOGENOM" id="CLU_016503_3_0_7"/>
<dbReference type="Proteomes" id="UP000001735">
    <property type="component" value="Chromosome"/>
</dbReference>
<dbReference type="GO" id="GO:0005737">
    <property type="term" value="C:cytoplasm"/>
    <property type="evidence" value="ECO:0007669"/>
    <property type="project" value="UniProtKB-SubCell"/>
</dbReference>
<dbReference type="GO" id="GO:0005524">
    <property type="term" value="F:ATP binding"/>
    <property type="evidence" value="ECO:0007669"/>
    <property type="project" value="UniProtKB-UniRule"/>
</dbReference>
<dbReference type="GO" id="GO:0140662">
    <property type="term" value="F:ATP-dependent protein folding chaperone"/>
    <property type="evidence" value="ECO:0007669"/>
    <property type="project" value="InterPro"/>
</dbReference>
<dbReference type="GO" id="GO:0016853">
    <property type="term" value="F:isomerase activity"/>
    <property type="evidence" value="ECO:0007669"/>
    <property type="project" value="UniProtKB-KW"/>
</dbReference>
<dbReference type="GO" id="GO:0051082">
    <property type="term" value="F:unfolded protein binding"/>
    <property type="evidence" value="ECO:0007669"/>
    <property type="project" value="UniProtKB-UniRule"/>
</dbReference>
<dbReference type="GO" id="GO:0042026">
    <property type="term" value="P:protein refolding"/>
    <property type="evidence" value="ECO:0007669"/>
    <property type="project" value="UniProtKB-UniRule"/>
</dbReference>
<dbReference type="CDD" id="cd03344">
    <property type="entry name" value="GroEL"/>
    <property type="match status" value="1"/>
</dbReference>
<dbReference type="FunFam" id="3.50.7.10:FF:000001">
    <property type="entry name" value="60 kDa chaperonin"/>
    <property type="match status" value="1"/>
</dbReference>
<dbReference type="Gene3D" id="3.50.7.10">
    <property type="entry name" value="GroEL"/>
    <property type="match status" value="1"/>
</dbReference>
<dbReference type="Gene3D" id="1.10.560.10">
    <property type="entry name" value="GroEL-like equatorial domain"/>
    <property type="match status" value="1"/>
</dbReference>
<dbReference type="Gene3D" id="3.30.260.10">
    <property type="entry name" value="TCP-1-like chaperonin intermediate domain"/>
    <property type="match status" value="1"/>
</dbReference>
<dbReference type="HAMAP" id="MF_00600">
    <property type="entry name" value="CH60"/>
    <property type="match status" value="1"/>
</dbReference>
<dbReference type="InterPro" id="IPR018370">
    <property type="entry name" value="Chaperonin_Cpn60_CS"/>
</dbReference>
<dbReference type="InterPro" id="IPR001844">
    <property type="entry name" value="Cpn60/GroEL"/>
</dbReference>
<dbReference type="InterPro" id="IPR002423">
    <property type="entry name" value="Cpn60/GroEL/TCP-1"/>
</dbReference>
<dbReference type="InterPro" id="IPR027409">
    <property type="entry name" value="GroEL-like_apical_dom_sf"/>
</dbReference>
<dbReference type="InterPro" id="IPR027413">
    <property type="entry name" value="GROEL-like_equatorial_sf"/>
</dbReference>
<dbReference type="InterPro" id="IPR027410">
    <property type="entry name" value="TCP-1-like_intermed_sf"/>
</dbReference>
<dbReference type="NCBIfam" id="TIGR02348">
    <property type="entry name" value="GroEL"/>
    <property type="match status" value="1"/>
</dbReference>
<dbReference type="NCBIfam" id="NF000592">
    <property type="entry name" value="PRK00013.1"/>
    <property type="match status" value="1"/>
</dbReference>
<dbReference type="NCBIfam" id="NF009487">
    <property type="entry name" value="PRK12849.1"/>
    <property type="match status" value="1"/>
</dbReference>
<dbReference type="NCBIfam" id="NF009488">
    <property type="entry name" value="PRK12850.1"/>
    <property type="match status" value="1"/>
</dbReference>
<dbReference type="NCBIfam" id="NF009489">
    <property type="entry name" value="PRK12851.1"/>
    <property type="match status" value="1"/>
</dbReference>
<dbReference type="PANTHER" id="PTHR45633">
    <property type="entry name" value="60 KDA HEAT SHOCK PROTEIN, MITOCHONDRIAL"/>
    <property type="match status" value="1"/>
</dbReference>
<dbReference type="Pfam" id="PF00118">
    <property type="entry name" value="Cpn60_TCP1"/>
    <property type="match status" value="1"/>
</dbReference>
<dbReference type="PRINTS" id="PR00298">
    <property type="entry name" value="CHAPERONIN60"/>
</dbReference>
<dbReference type="SUPFAM" id="SSF52029">
    <property type="entry name" value="GroEL apical domain-like"/>
    <property type="match status" value="1"/>
</dbReference>
<dbReference type="SUPFAM" id="SSF48592">
    <property type="entry name" value="GroEL equatorial domain-like"/>
    <property type="match status" value="2"/>
</dbReference>
<dbReference type="PROSITE" id="PS00296">
    <property type="entry name" value="CHAPERONINS_CPN60"/>
    <property type="match status" value="1"/>
</dbReference>
<evidence type="ECO:0000255" key="1">
    <source>
        <dbReference type="HAMAP-Rule" id="MF_00600"/>
    </source>
</evidence>
<organism>
    <name type="scientific">Helicobacter pylori (strain G27)</name>
    <dbReference type="NCBI Taxonomy" id="563041"/>
    <lineage>
        <taxon>Bacteria</taxon>
        <taxon>Pseudomonadati</taxon>
        <taxon>Campylobacterota</taxon>
        <taxon>Epsilonproteobacteria</taxon>
        <taxon>Campylobacterales</taxon>
        <taxon>Helicobacteraceae</taxon>
        <taxon>Helicobacter</taxon>
    </lineage>
</organism>
<proteinExistence type="inferred from homology"/>
<protein>
    <recommendedName>
        <fullName evidence="1">Chaperonin GroEL</fullName>
        <ecNumber evidence="1">5.6.1.7</ecNumber>
    </recommendedName>
    <alternativeName>
        <fullName evidence="1">60 kDa chaperonin</fullName>
    </alternativeName>
    <alternativeName>
        <fullName evidence="1">Chaperonin-60</fullName>
        <shortName evidence="1">Cpn60</shortName>
    </alternativeName>
</protein>